<feature type="chain" id="PRO_0000381029" description="8-amino-7-oxononanoate synthase">
    <location>
        <begin position="1"/>
        <end position="379"/>
    </location>
</feature>
<feature type="binding site" evidence="1">
    <location>
        <position position="27"/>
    </location>
    <ligand>
        <name>substrate</name>
    </ligand>
</feature>
<feature type="binding site" evidence="1">
    <location>
        <position position="34"/>
    </location>
    <ligand>
        <name>substrate</name>
    </ligand>
</feature>
<feature type="binding site" evidence="1">
    <location>
        <begin position="114"/>
        <end position="115"/>
    </location>
    <ligand>
        <name>pyridoxal 5'-phosphate</name>
        <dbReference type="ChEBI" id="CHEBI:597326"/>
    </ligand>
</feature>
<feature type="binding site" evidence="1">
    <location>
        <position position="139"/>
    </location>
    <ligand>
        <name>substrate</name>
    </ligand>
</feature>
<feature type="binding site" evidence="1">
    <location>
        <position position="187"/>
    </location>
    <ligand>
        <name>pyridoxal 5'-phosphate</name>
        <dbReference type="ChEBI" id="CHEBI:597326"/>
    </ligand>
</feature>
<feature type="binding site" evidence="1">
    <location>
        <begin position="212"/>
        <end position="215"/>
    </location>
    <ligand>
        <name>pyridoxal 5'-phosphate</name>
        <dbReference type="ChEBI" id="CHEBI:597326"/>
    </ligand>
</feature>
<feature type="binding site" evidence="1">
    <location>
        <begin position="232"/>
        <end position="235"/>
    </location>
    <ligand>
        <name>pyridoxal 5'-phosphate</name>
        <dbReference type="ChEBI" id="CHEBI:597326"/>
    </ligand>
</feature>
<feature type="binding site" evidence="1">
    <location>
        <position position="344"/>
    </location>
    <ligand>
        <name>substrate</name>
    </ligand>
</feature>
<feature type="modified residue" description="N6-(pyridoxal phosphate)lysine" evidence="1">
    <location>
        <position position="235"/>
    </location>
</feature>
<organism>
    <name type="scientific">Methylobacterium sp. (strain 4-46)</name>
    <dbReference type="NCBI Taxonomy" id="426117"/>
    <lineage>
        <taxon>Bacteria</taxon>
        <taxon>Pseudomonadati</taxon>
        <taxon>Pseudomonadota</taxon>
        <taxon>Alphaproteobacteria</taxon>
        <taxon>Hyphomicrobiales</taxon>
        <taxon>Methylobacteriaceae</taxon>
        <taxon>Methylobacterium</taxon>
    </lineage>
</organism>
<evidence type="ECO:0000250" key="1"/>
<evidence type="ECO:0000305" key="2"/>
<gene>
    <name type="ordered locus">M446_5168</name>
</gene>
<dbReference type="EC" id="2.3.1.47"/>
<dbReference type="EMBL" id="CP000943">
    <property type="protein sequence ID" value="ACA19493.1"/>
    <property type="molecule type" value="Genomic_DNA"/>
</dbReference>
<dbReference type="RefSeq" id="WP_012334879.1">
    <property type="nucleotide sequence ID" value="NC_010511.1"/>
</dbReference>
<dbReference type="SMR" id="B0UKC8"/>
<dbReference type="STRING" id="426117.M446_5168"/>
<dbReference type="KEGG" id="met:M446_5168"/>
<dbReference type="eggNOG" id="COG0156">
    <property type="taxonomic scope" value="Bacteria"/>
</dbReference>
<dbReference type="HOGENOM" id="CLU_015846_11_0_5"/>
<dbReference type="UniPathway" id="UPA00078"/>
<dbReference type="GO" id="GO:0008710">
    <property type="term" value="F:8-amino-7-oxononanoate synthase activity"/>
    <property type="evidence" value="ECO:0007669"/>
    <property type="project" value="UniProtKB-EC"/>
</dbReference>
<dbReference type="GO" id="GO:0030170">
    <property type="term" value="F:pyridoxal phosphate binding"/>
    <property type="evidence" value="ECO:0007669"/>
    <property type="project" value="InterPro"/>
</dbReference>
<dbReference type="GO" id="GO:0009102">
    <property type="term" value="P:biotin biosynthetic process"/>
    <property type="evidence" value="ECO:0007669"/>
    <property type="project" value="UniProtKB-UniPathway"/>
</dbReference>
<dbReference type="Gene3D" id="3.90.1150.10">
    <property type="entry name" value="Aspartate Aminotransferase, domain 1"/>
    <property type="match status" value="1"/>
</dbReference>
<dbReference type="Gene3D" id="3.40.640.10">
    <property type="entry name" value="Type I PLP-dependent aspartate aminotransferase-like (Major domain)"/>
    <property type="match status" value="1"/>
</dbReference>
<dbReference type="InterPro" id="IPR001917">
    <property type="entry name" value="Aminotrans_II_pyridoxalP_BS"/>
</dbReference>
<dbReference type="InterPro" id="IPR004839">
    <property type="entry name" value="Aminotransferase_I/II_large"/>
</dbReference>
<dbReference type="InterPro" id="IPR050087">
    <property type="entry name" value="AON_synthase_class-II"/>
</dbReference>
<dbReference type="InterPro" id="IPR015424">
    <property type="entry name" value="PyrdxlP-dep_Trfase"/>
</dbReference>
<dbReference type="InterPro" id="IPR015421">
    <property type="entry name" value="PyrdxlP-dep_Trfase_major"/>
</dbReference>
<dbReference type="InterPro" id="IPR015422">
    <property type="entry name" value="PyrdxlP-dep_Trfase_small"/>
</dbReference>
<dbReference type="PANTHER" id="PTHR13693:SF100">
    <property type="entry name" value="8-AMINO-7-OXONONANOATE SYNTHASE"/>
    <property type="match status" value="1"/>
</dbReference>
<dbReference type="PANTHER" id="PTHR13693">
    <property type="entry name" value="CLASS II AMINOTRANSFERASE/8-AMINO-7-OXONONANOATE SYNTHASE"/>
    <property type="match status" value="1"/>
</dbReference>
<dbReference type="Pfam" id="PF00155">
    <property type="entry name" value="Aminotran_1_2"/>
    <property type="match status" value="1"/>
</dbReference>
<dbReference type="SUPFAM" id="SSF53383">
    <property type="entry name" value="PLP-dependent transferases"/>
    <property type="match status" value="1"/>
</dbReference>
<dbReference type="PROSITE" id="PS00599">
    <property type="entry name" value="AA_TRANSFER_CLASS_2"/>
    <property type="match status" value="1"/>
</dbReference>
<comment type="function">
    <text evidence="1">Catalyzes the decarboxylative condensation of pimeloyl-[acyl-carrier protein] and L-alanine to produce 8-amino-7-oxononanoate (AON), [acyl-carrier protein], and carbon dioxide.</text>
</comment>
<comment type="catalytic activity">
    <reaction>
        <text>6-carboxyhexanoyl-[ACP] + L-alanine + H(+) = (8S)-8-amino-7-oxononanoate + holo-[ACP] + CO2</text>
        <dbReference type="Rhea" id="RHEA:42288"/>
        <dbReference type="Rhea" id="RHEA-COMP:9685"/>
        <dbReference type="Rhea" id="RHEA-COMP:9955"/>
        <dbReference type="ChEBI" id="CHEBI:15378"/>
        <dbReference type="ChEBI" id="CHEBI:16526"/>
        <dbReference type="ChEBI" id="CHEBI:57972"/>
        <dbReference type="ChEBI" id="CHEBI:64479"/>
        <dbReference type="ChEBI" id="CHEBI:78846"/>
        <dbReference type="ChEBI" id="CHEBI:149468"/>
        <dbReference type="EC" id="2.3.1.47"/>
    </reaction>
</comment>
<comment type="cofactor">
    <cofactor evidence="1">
        <name>pyridoxal 5'-phosphate</name>
        <dbReference type="ChEBI" id="CHEBI:597326"/>
    </cofactor>
</comment>
<comment type="pathway">
    <text>Cofactor biosynthesis; biotin biosynthesis.</text>
</comment>
<comment type="subunit">
    <text evidence="1">Homodimer.</text>
</comment>
<comment type="similarity">
    <text evidence="2">Belongs to the class-II pyridoxal-phosphate-dependent aminotransferase family. BioF subfamily.</text>
</comment>
<sequence length="379" mass="39067">MPVPPTLSLDAFAAAKLAGLDAAGLRRRLVPTARTGGARAERDGRAVVSFSCNDYLGLATHPEVVAAAHAALDRYGAGSGGSRLVTGSHPILAELEAALAARKGHEAALVFGSGYLANLGVTPALVGAGDLILIDELGHSCMWAGTRLAGARALPFRHNDLGHLEDLLARERARARRALILTERVFSMDGDRAPVAEILGLARAFDAWTLVDDAHGLGVVGPDATAPLEMGTLSKALGSYGGYLCASRPVIDLLTSRARSFVYTTGLPPASAAAALAALRLIEAEPARAARPLALARRFTARLGLPEAQSAVVPVLVGEAEAALALSRALEARGFLVVAIRPPTVPPGTARLRVAFSAAHEEAEVDALAQALLDLGAAA</sequence>
<name>BIOF_METS4</name>
<reference key="1">
    <citation type="submission" date="2008-02" db="EMBL/GenBank/DDBJ databases">
        <title>Complete sequence of chromosome of Methylobacterium sp. 4-46.</title>
        <authorList>
            <consortium name="US DOE Joint Genome Institute"/>
            <person name="Copeland A."/>
            <person name="Lucas S."/>
            <person name="Lapidus A."/>
            <person name="Glavina del Rio T."/>
            <person name="Dalin E."/>
            <person name="Tice H."/>
            <person name="Bruce D."/>
            <person name="Goodwin L."/>
            <person name="Pitluck S."/>
            <person name="Chertkov O."/>
            <person name="Brettin T."/>
            <person name="Detter J.C."/>
            <person name="Han C."/>
            <person name="Kuske C.R."/>
            <person name="Schmutz J."/>
            <person name="Larimer F."/>
            <person name="Land M."/>
            <person name="Hauser L."/>
            <person name="Kyrpides N."/>
            <person name="Ivanova N."/>
            <person name="Marx C.J."/>
            <person name="Richardson P."/>
        </authorList>
    </citation>
    <scope>NUCLEOTIDE SEQUENCE [LARGE SCALE GENOMIC DNA]</scope>
    <source>
        <strain>4-46</strain>
    </source>
</reference>
<keyword id="KW-0012">Acyltransferase</keyword>
<keyword id="KW-0093">Biotin biosynthesis</keyword>
<keyword id="KW-0663">Pyridoxal phosphate</keyword>
<keyword id="KW-0808">Transferase</keyword>
<protein>
    <recommendedName>
        <fullName>8-amino-7-oxononanoate synthase</fullName>
        <shortName>AONS</shortName>
        <ecNumber>2.3.1.47</ecNumber>
    </recommendedName>
    <alternativeName>
        <fullName>7-keto-8-amino-pelargonic acid synthase</fullName>
        <shortName>7-KAP synthase</shortName>
        <shortName>KAPA synthase</shortName>
    </alternativeName>
    <alternativeName>
        <fullName>8-amino-7-ketopelargonate synthase</fullName>
    </alternativeName>
    <alternativeName>
        <fullName>Alpha-oxoamine synthase</fullName>
    </alternativeName>
</protein>
<proteinExistence type="inferred from homology"/>
<accession>B0UKC8</accession>